<evidence type="ECO:0000250" key="1"/>
<evidence type="ECO:0000255" key="2"/>
<evidence type="ECO:0000255" key="3">
    <source>
        <dbReference type="PROSITE-ProRule" id="PRU10074"/>
    </source>
</evidence>
<evidence type="ECO:0000256" key="4">
    <source>
        <dbReference type="SAM" id="MobiDB-lite"/>
    </source>
</evidence>
<evidence type="ECO:0000305" key="5"/>
<dbReference type="EC" id="3.4.16.6"/>
<dbReference type="EMBL" id="ABSU01000001">
    <property type="protein sequence ID" value="EFE36524.1"/>
    <property type="molecule type" value="Genomic_DNA"/>
</dbReference>
<dbReference type="RefSeq" id="XP_003017169.1">
    <property type="nucleotide sequence ID" value="XM_003017123.1"/>
</dbReference>
<dbReference type="SMR" id="D4AIF1"/>
<dbReference type="ESTHER" id="triru-SPCA">
    <property type="family name" value="Carboxypeptidase_S10"/>
</dbReference>
<dbReference type="MEROPS" id="S10.016"/>
<dbReference type="GlyCosmos" id="D4AIF1">
    <property type="glycosylation" value="14 sites, No reported glycans"/>
</dbReference>
<dbReference type="GeneID" id="9527135"/>
<dbReference type="KEGG" id="abe:ARB_04046"/>
<dbReference type="eggNOG" id="KOG1282">
    <property type="taxonomic scope" value="Eukaryota"/>
</dbReference>
<dbReference type="HOGENOM" id="CLU_008523_10_3_1"/>
<dbReference type="OMA" id="PASTWHI"/>
<dbReference type="OrthoDB" id="443318at2759"/>
<dbReference type="Proteomes" id="UP000008866">
    <property type="component" value="Unassembled WGS sequence"/>
</dbReference>
<dbReference type="GO" id="GO:0000324">
    <property type="term" value="C:fungal-type vacuole"/>
    <property type="evidence" value="ECO:0007669"/>
    <property type="project" value="TreeGrafter"/>
</dbReference>
<dbReference type="GO" id="GO:0005886">
    <property type="term" value="C:plasma membrane"/>
    <property type="evidence" value="ECO:0007669"/>
    <property type="project" value="UniProtKB-SubCell"/>
</dbReference>
<dbReference type="GO" id="GO:0098552">
    <property type="term" value="C:side of membrane"/>
    <property type="evidence" value="ECO:0007669"/>
    <property type="project" value="UniProtKB-KW"/>
</dbReference>
<dbReference type="GO" id="GO:0004185">
    <property type="term" value="F:serine-type carboxypeptidase activity"/>
    <property type="evidence" value="ECO:0007669"/>
    <property type="project" value="UniProtKB-EC"/>
</dbReference>
<dbReference type="GO" id="GO:0006508">
    <property type="term" value="P:proteolysis"/>
    <property type="evidence" value="ECO:0007669"/>
    <property type="project" value="UniProtKB-KW"/>
</dbReference>
<dbReference type="Gene3D" id="3.40.50.1820">
    <property type="entry name" value="alpha/beta hydrolase"/>
    <property type="match status" value="1"/>
</dbReference>
<dbReference type="InterPro" id="IPR029058">
    <property type="entry name" value="AB_hydrolase_fold"/>
</dbReference>
<dbReference type="InterPro" id="IPR001563">
    <property type="entry name" value="Peptidase_S10"/>
</dbReference>
<dbReference type="InterPro" id="IPR018202">
    <property type="entry name" value="Ser_caboxypep_ser_AS"/>
</dbReference>
<dbReference type="PANTHER" id="PTHR11802:SF189">
    <property type="entry name" value="CARBOXYPEPTIDASE"/>
    <property type="match status" value="1"/>
</dbReference>
<dbReference type="PANTHER" id="PTHR11802">
    <property type="entry name" value="SERINE PROTEASE FAMILY S10 SERINE CARBOXYPEPTIDASE"/>
    <property type="match status" value="1"/>
</dbReference>
<dbReference type="Pfam" id="PF00450">
    <property type="entry name" value="Peptidase_S10"/>
    <property type="match status" value="1"/>
</dbReference>
<dbReference type="PRINTS" id="PR00724">
    <property type="entry name" value="CRBOXYPTASEC"/>
</dbReference>
<dbReference type="SUPFAM" id="SSF53474">
    <property type="entry name" value="alpha/beta-Hydrolases"/>
    <property type="match status" value="1"/>
</dbReference>
<dbReference type="PROSITE" id="PS00131">
    <property type="entry name" value="CARBOXYPEPT_SER_SER"/>
    <property type="match status" value="1"/>
</dbReference>
<reference key="1">
    <citation type="journal article" date="2011" name="Genome Biol.">
        <title>Comparative and functional genomics provide insights into the pathogenicity of dermatophytic fungi.</title>
        <authorList>
            <person name="Burmester A."/>
            <person name="Shelest E."/>
            <person name="Gloeckner G."/>
            <person name="Heddergott C."/>
            <person name="Schindler S."/>
            <person name="Staib P."/>
            <person name="Heidel A."/>
            <person name="Felder M."/>
            <person name="Petzold A."/>
            <person name="Szafranski K."/>
            <person name="Feuermann M."/>
            <person name="Pedruzzi I."/>
            <person name="Priebe S."/>
            <person name="Groth M."/>
            <person name="Winkler R."/>
            <person name="Li W."/>
            <person name="Kniemeyer O."/>
            <person name="Schroeckh V."/>
            <person name="Hertweck C."/>
            <person name="Hube B."/>
            <person name="White T.C."/>
            <person name="Platzer M."/>
            <person name="Guthke R."/>
            <person name="Heitman J."/>
            <person name="Woestemeyer J."/>
            <person name="Zipfel P.F."/>
            <person name="Monod M."/>
            <person name="Brakhage A.A."/>
        </authorList>
    </citation>
    <scope>NUCLEOTIDE SEQUENCE [LARGE SCALE GENOMIC DNA]</scope>
    <source>
        <strain>ATCC MYA-4681 / CBS 112371</strain>
    </source>
</reference>
<protein>
    <recommendedName>
        <fullName>Carboxypeptidase S1 homolog A</fullName>
        <ecNumber>3.4.16.6</ecNumber>
    </recommendedName>
    <alternativeName>
        <fullName>Serine carboxypeptidase A</fullName>
        <shortName>SCPA</shortName>
    </alternativeName>
</protein>
<proteinExistence type="inferred from homology"/>
<keyword id="KW-0121">Carboxypeptidase</keyword>
<keyword id="KW-1003">Cell membrane</keyword>
<keyword id="KW-1015">Disulfide bond</keyword>
<keyword id="KW-0325">Glycoprotein</keyword>
<keyword id="KW-0336">GPI-anchor</keyword>
<keyword id="KW-0378">Hydrolase</keyword>
<keyword id="KW-0449">Lipoprotein</keyword>
<keyword id="KW-0472">Membrane</keyword>
<keyword id="KW-0645">Protease</keyword>
<keyword id="KW-1185">Reference proteome</keyword>
<keyword id="KW-0732">Signal</keyword>
<keyword id="KW-0843">Virulence</keyword>
<organism>
    <name type="scientific">Arthroderma benhamiae (strain ATCC MYA-4681 / CBS 112371)</name>
    <name type="common">Trichophyton mentagrophytes</name>
    <dbReference type="NCBI Taxonomy" id="663331"/>
    <lineage>
        <taxon>Eukaryota</taxon>
        <taxon>Fungi</taxon>
        <taxon>Dikarya</taxon>
        <taxon>Ascomycota</taxon>
        <taxon>Pezizomycotina</taxon>
        <taxon>Eurotiomycetes</taxon>
        <taxon>Eurotiomycetidae</taxon>
        <taxon>Onygenales</taxon>
        <taxon>Arthrodermataceae</taxon>
        <taxon>Trichophyton</taxon>
    </lineage>
</organism>
<gene>
    <name type="primary">SCPA</name>
    <name type="ORF">ARB_04046</name>
</gene>
<name>SCPA_ARTBC</name>
<comment type="function">
    <text evidence="1">Extracellular serine carboxypeptidase that contributes to pathogenicity.</text>
</comment>
<comment type="catalytic activity">
    <reaction>
        <text>Preferential release of a C-terminal arginine or lysine residue.</text>
        <dbReference type="EC" id="3.4.16.6"/>
    </reaction>
</comment>
<comment type="subcellular location">
    <subcellularLocation>
        <location evidence="5">Cell membrane</location>
        <topology evidence="5">Lipid-anchor</topology>
        <topology evidence="5">GPI-anchor</topology>
    </subcellularLocation>
</comment>
<comment type="similarity">
    <text evidence="5">Belongs to the peptidase S10 family.</text>
</comment>
<sequence>MRLAASIAVALPVIGAASAQGFPPPVMGVTVVKSKYDENVKITYKENDICETTEGVRSFTGHVHLPPDNDYFGVYQNYSINTFFWFFEAREDPKNAPLSIWLNGGPGSSSMIGLFQENGPCWINDDSKSTTNNSFSWNNRVNMLYIDQPNQVGFSYDELTNITYSTINDTISVADFSSGVPAQNLSTLVGTGSSQKPWATANNTVNAARSIWHFAQVWFQEFPEHKPNNNKISIWTESYGGRYGPSFASYFQEQNEKIKNHTITKEGEMHILNLDTLGVINGCIDLMFQAESYAEFPYNNTYGITAYTKEKRDAIIRDIHRPDGCFDKLAKCREAAKEGDPHFYSNNATVNAICAEANSDCDKYLMEPFQEANLGYYDIAHPLQDPFPPPFFKGFLSQSSVLSDMGSPVNFSHYSQAVGKSFHGVGDYARPDVRGFTGDIAYLLESGVKVALVYGDRDYICNWLGGEQVSLGLNYTGTEAFRKAGYADVKVNSSYVGGLVRQHGNFSFTRVFEAGHEVPGYQPETSLKIFERIMFNKDIATGELDIAQKQDYGTTGTESTFQVKNEIPPSPEPTCYLLSADGTCTPEQLNAIENGTAVVENYIIKSPAASKGNPPPTTTSSPTASPTAGSAMLKAPVAMLAISALTVLAFYL</sequence>
<accession>D4AIF1</accession>
<feature type="signal peptide" evidence="2">
    <location>
        <begin position="1"/>
        <end position="19"/>
    </location>
</feature>
<feature type="chain" id="PRO_0000397823" description="Carboxypeptidase S1 homolog A">
    <location>
        <begin position="20"/>
        <end position="629"/>
    </location>
</feature>
<feature type="propeptide" id="PRO_0000397824" description="Removed in mature form" evidence="2">
    <location>
        <begin position="630"/>
        <end position="652"/>
    </location>
</feature>
<feature type="region of interest" description="Disordered" evidence="4">
    <location>
        <begin position="608"/>
        <end position="628"/>
    </location>
</feature>
<feature type="compositionally biased region" description="Low complexity" evidence="4">
    <location>
        <begin position="618"/>
        <end position="628"/>
    </location>
</feature>
<feature type="active site" evidence="3">
    <location>
        <position position="238"/>
    </location>
</feature>
<feature type="active site" evidence="3">
    <location>
        <position position="458"/>
    </location>
</feature>
<feature type="active site" evidence="3">
    <location>
        <position position="516"/>
    </location>
</feature>
<feature type="binding site" evidence="1">
    <location>
        <position position="461"/>
    </location>
    <ligand>
        <name>substrate</name>
    </ligand>
</feature>
<feature type="binding site" evidence="1">
    <location>
        <position position="517"/>
    </location>
    <ligand>
        <name>substrate</name>
    </ligand>
</feature>
<feature type="lipid moiety-binding region" description="GPI-anchor amidated glycine" evidence="2">
    <location>
        <position position="629"/>
    </location>
</feature>
<feature type="glycosylation site" description="N-linked (GlcNAc...) asparagine" evidence="2">
    <location>
        <position position="77"/>
    </location>
</feature>
<feature type="glycosylation site" description="N-linked (GlcNAc...) asparagine" evidence="2">
    <location>
        <position position="132"/>
    </location>
</feature>
<feature type="glycosylation site" description="N-linked (GlcNAc...) asparagine" evidence="2">
    <location>
        <position position="161"/>
    </location>
</feature>
<feature type="glycosylation site" description="N-linked (GlcNAc...) asparagine" evidence="2">
    <location>
        <position position="168"/>
    </location>
</feature>
<feature type="glycosylation site" description="N-linked (GlcNAc...) asparagine" evidence="2">
    <location>
        <position position="184"/>
    </location>
</feature>
<feature type="glycosylation site" description="N-linked (GlcNAc...) asparagine" evidence="2">
    <location>
        <position position="202"/>
    </location>
</feature>
<feature type="glycosylation site" description="N-linked (GlcNAc...) asparagine" evidence="2">
    <location>
        <position position="260"/>
    </location>
</feature>
<feature type="glycosylation site" description="N-linked (GlcNAc...) asparagine" evidence="2">
    <location>
        <position position="299"/>
    </location>
</feature>
<feature type="glycosylation site" description="N-linked (GlcNAc...) asparagine" evidence="2">
    <location>
        <position position="347"/>
    </location>
</feature>
<feature type="glycosylation site" description="N-linked (GlcNAc...) asparagine" evidence="2">
    <location>
        <position position="410"/>
    </location>
</feature>
<feature type="glycosylation site" description="N-linked (GlcNAc...) asparagine" evidence="2">
    <location>
        <position position="474"/>
    </location>
</feature>
<feature type="glycosylation site" description="N-linked (GlcNAc...) asparagine" evidence="2">
    <location>
        <position position="492"/>
    </location>
</feature>
<feature type="glycosylation site" description="N-linked (GlcNAc...) asparagine" evidence="2">
    <location>
        <position position="505"/>
    </location>
</feature>
<feature type="glycosylation site" description="N-linked (GlcNAc...) asparagine" evidence="2">
    <location>
        <position position="594"/>
    </location>
</feature>
<feature type="disulfide bond" evidence="1">
    <location>
        <begin position="50"/>
        <end position="121"/>
    </location>
</feature>
<feature type="disulfide bond" evidence="1">
    <location>
        <begin position="325"/>
        <end position="361"/>
    </location>
</feature>
<feature type="disulfide bond" evidence="1">
    <location>
        <begin position="332"/>
        <end position="354"/>
    </location>
</feature>